<name>YDZJ_BACSU</name>
<dbReference type="EMBL" id="AB007638">
    <property type="protein sequence ID" value="BAA22770.1"/>
    <property type="molecule type" value="Genomic_DNA"/>
</dbReference>
<dbReference type="EMBL" id="AL009126">
    <property type="protein sequence ID" value="CAX52576.1"/>
    <property type="molecule type" value="Genomic_DNA"/>
</dbReference>
<dbReference type="RefSeq" id="WP_003243985.1">
    <property type="nucleotide sequence ID" value="NZ_OZ025638.1"/>
</dbReference>
<dbReference type="RefSeq" id="YP_003097689.1">
    <property type="nucleotide sequence ID" value="NC_000964.3"/>
</dbReference>
<dbReference type="SMR" id="O24817"/>
<dbReference type="FunCoup" id="O24817">
    <property type="interactions" value="1"/>
</dbReference>
<dbReference type="PaxDb" id="224308-BSU06269"/>
<dbReference type="EnsemblBacteria" id="CAX52576">
    <property type="protein sequence ID" value="CAX52576"/>
    <property type="gene ID" value="BSU_06269"/>
</dbReference>
<dbReference type="GeneID" id="8303125"/>
<dbReference type="KEGG" id="bsu:BSU06269"/>
<dbReference type="PATRIC" id="fig|224308.179.peg.679"/>
<dbReference type="InParanoid" id="O24817"/>
<dbReference type="OrthoDB" id="2910411at2"/>
<dbReference type="BioCyc" id="BSUB:BSU06269-MONOMER"/>
<dbReference type="Proteomes" id="UP000001570">
    <property type="component" value="Chromosome"/>
</dbReference>
<dbReference type="GO" id="GO:0005886">
    <property type="term" value="C:plasma membrane"/>
    <property type="evidence" value="ECO:0007669"/>
    <property type="project" value="UniProtKB-SubCell"/>
</dbReference>
<protein>
    <recommendedName>
        <fullName>Uncharacterized membrane protein YdzJ</fullName>
    </recommendedName>
</protein>
<feature type="chain" id="PRO_0000379093" description="Uncharacterized membrane protein YdzJ">
    <location>
        <begin position="1"/>
        <end position="52"/>
    </location>
</feature>
<feature type="transmembrane region" description="Helical" evidence="1">
    <location>
        <begin position="21"/>
        <end position="40"/>
    </location>
</feature>
<comment type="subcellular location">
    <subcellularLocation>
        <location evidence="2">Cell membrane</location>
        <topology evidence="2">Single-pass membrane protein</topology>
    </subcellularLocation>
</comment>
<sequence length="52" mass="6047">MISNQQQKDLKKRAAFKKLNVAMNSYVELLFLSVPLIHIFKWLGSLALHLIH</sequence>
<evidence type="ECO:0000255" key="1"/>
<evidence type="ECO:0000305" key="2"/>
<keyword id="KW-1003">Cell membrane</keyword>
<keyword id="KW-0472">Membrane</keyword>
<keyword id="KW-1185">Reference proteome</keyword>
<keyword id="KW-0812">Transmembrane</keyword>
<keyword id="KW-1133">Transmembrane helix</keyword>
<proteinExistence type="predicted"/>
<organism>
    <name type="scientific">Bacillus subtilis (strain 168)</name>
    <dbReference type="NCBI Taxonomy" id="224308"/>
    <lineage>
        <taxon>Bacteria</taxon>
        <taxon>Bacillati</taxon>
        <taxon>Bacillota</taxon>
        <taxon>Bacilli</taxon>
        <taxon>Bacillales</taxon>
        <taxon>Bacillaceae</taxon>
        <taxon>Bacillus</taxon>
    </lineage>
</organism>
<accession>O24817</accession>
<reference key="1">
    <citation type="journal article" date="1997" name="DNA Res.">
        <title>Sequence analysis of the groESL-cotA region of the Bacillus subtilis genome, containing the restriction/modification system genes.</title>
        <authorList>
            <person name="Kasahara Y."/>
            <person name="Nakai S."/>
            <person name="Ogasawara N."/>
            <person name="Yata K."/>
            <person name="Sadaie Y."/>
        </authorList>
    </citation>
    <scope>NUCLEOTIDE SEQUENCE [GENOMIC DNA]</scope>
    <source>
        <strain>168 / Marburg / ATCC 6051 / DSM 10 / JCM 1465 / NBRC 13719 / NCIMB 3610 / NRRL NRS-744 / VKM B-501</strain>
    </source>
</reference>
<reference key="2">
    <citation type="journal article" date="1997" name="Nature">
        <title>The complete genome sequence of the Gram-positive bacterium Bacillus subtilis.</title>
        <authorList>
            <person name="Kunst F."/>
            <person name="Ogasawara N."/>
            <person name="Moszer I."/>
            <person name="Albertini A.M."/>
            <person name="Alloni G."/>
            <person name="Azevedo V."/>
            <person name="Bertero M.G."/>
            <person name="Bessieres P."/>
            <person name="Bolotin A."/>
            <person name="Borchert S."/>
            <person name="Borriss R."/>
            <person name="Boursier L."/>
            <person name="Brans A."/>
            <person name="Braun M."/>
            <person name="Brignell S.C."/>
            <person name="Bron S."/>
            <person name="Brouillet S."/>
            <person name="Bruschi C.V."/>
            <person name="Caldwell B."/>
            <person name="Capuano V."/>
            <person name="Carter N.M."/>
            <person name="Choi S.-K."/>
            <person name="Codani J.-J."/>
            <person name="Connerton I.F."/>
            <person name="Cummings N.J."/>
            <person name="Daniel R.A."/>
            <person name="Denizot F."/>
            <person name="Devine K.M."/>
            <person name="Duesterhoeft A."/>
            <person name="Ehrlich S.D."/>
            <person name="Emmerson P.T."/>
            <person name="Entian K.-D."/>
            <person name="Errington J."/>
            <person name="Fabret C."/>
            <person name="Ferrari E."/>
            <person name="Foulger D."/>
            <person name="Fritz C."/>
            <person name="Fujita M."/>
            <person name="Fujita Y."/>
            <person name="Fuma S."/>
            <person name="Galizzi A."/>
            <person name="Galleron N."/>
            <person name="Ghim S.-Y."/>
            <person name="Glaser P."/>
            <person name="Goffeau A."/>
            <person name="Golightly E.J."/>
            <person name="Grandi G."/>
            <person name="Guiseppi G."/>
            <person name="Guy B.J."/>
            <person name="Haga K."/>
            <person name="Haiech J."/>
            <person name="Harwood C.R."/>
            <person name="Henaut A."/>
            <person name="Hilbert H."/>
            <person name="Holsappel S."/>
            <person name="Hosono S."/>
            <person name="Hullo M.-F."/>
            <person name="Itaya M."/>
            <person name="Jones L.-M."/>
            <person name="Joris B."/>
            <person name="Karamata D."/>
            <person name="Kasahara Y."/>
            <person name="Klaerr-Blanchard M."/>
            <person name="Klein C."/>
            <person name="Kobayashi Y."/>
            <person name="Koetter P."/>
            <person name="Koningstein G."/>
            <person name="Krogh S."/>
            <person name="Kumano M."/>
            <person name="Kurita K."/>
            <person name="Lapidus A."/>
            <person name="Lardinois S."/>
            <person name="Lauber J."/>
            <person name="Lazarevic V."/>
            <person name="Lee S.-M."/>
            <person name="Levine A."/>
            <person name="Liu H."/>
            <person name="Masuda S."/>
            <person name="Mauel C."/>
            <person name="Medigue C."/>
            <person name="Medina N."/>
            <person name="Mellado R.P."/>
            <person name="Mizuno M."/>
            <person name="Moestl D."/>
            <person name="Nakai S."/>
            <person name="Noback M."/>
            <person name="Noone D."/>
            <person name="O'Reilly M."/>
            <person name="Ogawa K."/>
            <person name="Ogiwara A."/>
            <person name="Oudega B."/>
            <person name="Park S.-H."/>
            <person name="Parro V."/>
            <person name="Pohl T.M."/>
            <person name="Portetelle D."/>
            <person name="Porwollik S."/>
            <person name="Prescott A.M."/>
            <person name="Presecan E."/>
            <person name="Pujic P."/>
            <person name="Purnelle B."/>
            <person name="Rapoport G."/>
            <person name="Rey M."/>
            <person name="Reynolds S."/>
            <person name="Rieger M."/>
            <person name="Rivolta C."/>
            <person name="Rocha E."/>
            <person name="Roche B."/>
            <person name="Rose M."/>
            <person name="Sadaie Y."/>
            <person name="Sato T."/>
            <person name="Scanlan E."/>
            <person name="Schleich S."/>
            <person name="Schroeter R."/>
            <person name="Scoffone F."/>
            <person name="Sekiguchi J."/>
            <person name="Sekowska A."/>
            <person name="Seror S.J."/>
            <person name="Serror P."/>
            <person name="Shin B.-S."/>
            <person name="Soldo B."/>
            <person name="Sorokin A."/>
            <person name="Tacconi E."/>
            <person name="Takagi T."/>
            <person name="Takahashi H."/>
            <person name="Takemaru K."/>
            <person name="Takeuchi M."/>
            <person name="Tamakoshi A."/>
            <person name="Tanaka T."/>
            <person name="Terpstra P."/>
            <person name="Tognoni A."/>
            <person name="Tosato V."/>
            <person name="Uchiyama S."/>
            <person name="Vandenbol M."/>
            <person name="Vannier F."/>
            <person name="Vassarotti A."/>
            <person name="Viari A."/>
            <person name="Wambutt R."/>
            <person name="Wedler E."/>
            <person name="Wedler H."/>
            <person name="Weitzenegger T."/>
            <person name="Winters P."/>
            <person name="Wipat A."/>
            <person name="Yamamoto H."/>
            <person name="Yamane K."/>
            <person name="Yasumoto K."/>
            <person name="Yata K."/>
            <person name="Yoshida K."/>
            <person name="Yoshikawa H.-F."/>
            <person name="Zumstein E."/>
            <person name="Yoshikawa H."/>
            <person name="Danchin A."/>
        </authorList>
    </citation>
    <scope>NUCLEOTIDE SEQUENCE [LARGE SCALE GENOMIC DNA]</scope>
    <source>
        <strain>168</strain>
    </source>
</reference>
<gene>
    <name type="primary">ydzJ</name>
    <name type="ordered locus">BSU06269</name>
</gene>